<comment type="function">
    <text evidence="3">Involved in development during embryogenesis.</text>
</comment>
<comment type="subcellular location">
    <subcellularLocation>
        <location>Nucleus</location>
    </subcellularLocation>
</comment>
<comment type="tissue specificity">
    <text evidence="3">During embryogenesis, expressed in neuroblasts derived from procephalic region, ventral nervous system, thoracic sensory neurons and brain cells.</text>
</comment>
<comment type="developmental stage">
    <text evidence="3">Expressed at very low levels during embryogenesis.</text>
</comment>
<sequence length="456" mass="49054">MHTSTDPMHTLHDSVSLSPPLIKSSRGGSSIGNGIGCSASSRTAAADAMSMGCDDSDIEPSSMGGSGAAGGNGDGSGSSGGPLVKPPYSYIALITMAILQSPHKKLTLSGICDFIMSRFPYYKDKFPAWQNSIRHNLSLNDCFIKVPREPGNPGKGNFWTLDPLAEDMFDNGSFLRRRKRYKRAPTMQRFSFPAVFGTLSPFWIRKPVPLVPVHFNVPNFNGSREFDVVHNPADVFDSALRADKKFNFFANAEASFYQGSQSGDKFDRLPFMNRGRGADVLDALPHSSGSGGGVGGGSESSRGSKYKSPYAFDVATVASAAGIPGHRDYAERLSAGGGYMDLNVYNDDADTEADAEAEGDDDSCEDKIDVESGNEQEDSHISDSVDSACTNRLDAPPEALIFEASAEASDSSPRRRFDSEPLVLRTSKQSSAKDFRIETLIGHHLHRGGSQEETSD</sequence>
<dbReference type="EMBL" id="AE013599">
    <property type="protein sequence ID" value="AAF46917.1"/>
    <property type="molecule type" value="Genomic_DNA"/>
</dbReference>
<dbReference type="EMBL" id="AY084204">
    <property type="protein sequence ID" value="AAL89942.1"/>
    <property type="molecule type" value="mRNA"/>
</dbReference>
<dbReference type="EMBL" id="BT025198">
    <property type="protein sequence ID" value="ABF17889.1"/>
    <property type="molecule type" value="mRNA"/>
</dbReference>
<dbReference type="EMBL" id="M96442">
    <property type="protein sequence ID" value="AAA28534.1"/>
    <property type="molecule type" value="Genomic_DNA"/>
</dbReference>
<dbReference type="PIR" id="C46178">
    <property type="entry name" value="C46178"/>
</dbReference>
<dbReference type="RefSeq" id="NP_523814.1">
    <property type="nucleotide sequence ID" value="NM_079090.3"/>
</dbReference>
<dbReference type="SMR" id="Q02361"/>
<dbReference type="BioGRID" id="63243">
    <property type="interactions" value="44"/>
</dbReference>
<dbReference type="DIP" id="DIP-19745N"/>
<dbReference type="IntAct" id="Q02361">
    <property type="interactions" value="6"/>
</dbReference>
<dbReference type="STRING" id="7227.FBpp0071809"/>
<dbReference type="PaxDb" id="7227-FBpp0071809"/>
<dbReference type="DNASU" id="37631"/>
<dbReference type="EnsemblMetazoa" id="FBtr0071898">
    <property type="protein sequence ID" value="FBpp0071809"/>
    <property type="gene ID" value="FBgn0004896"/>
</dbReference>
<dbReference type="GeneID" id="37631"/>
<dbReference type="KEGG" id="dme:Dmel_CG3668"/>
<dbReference type="AGR" id="FB:FBgn0004896"/>
<dbReference type="CTD" id="37631"/>
<dbReference type="FlyBase" id="FBgn0004896">
    <property type="gene designation" value="fd59A"/>
</dbReference>
<dbReference type="VEuPathDB" id="VectorBase:FBgn0004896"/>
<dbReference type="eggNOG" id="KOG2294">
    <property type="taxonomic scope" value="Eukaryota"/>
</dbReference>
<dbReference type="GeneTree" id="ENSGT00940000157140"/>
<dbReference type="HOGENOM" id="CLU_044772_1_0_1"/>
<dbReference type="InParanoid" id="Q02361"/>
<dbReference type="OMA" id="TLSPFWI"/>
<dbReference type="OrthoDB" id="5402974at2759"/>
<dbReference type="PhylomeDB" id="Q02361"/>
<dbReference type="SignaLink" id="Q02361"/>
<dbReference type="BioGRID-ORCS" id="37631">
    <property type="hits" value="0 hits in 3 CRISPR screens"/>
</dbReference>
<dbReference type="GenomeRNAi" id="37631"/>
<dbReference type="PRO" id="PR:Q02361"/>
<dbReference type="Proteomes" id="UP000000803">
    <property type="component" value="Chromosome 2R"/>
</dbReference>
<dbReference type="Bgee" id="FBgn0004896">
    <property type="expression patterns" value="Expressed in distal medullary amacrine neuron Dm11 in insect head and 36 other cell types or tissues"/>
</dbReference>
<dbReference type="ExpressionAtlas" id="Q02361">
    <property type="expression patterns" value="baseline and differential"/>
</dbReference>
<dbReference type="GO" id="GO:0005634">
    <property type="term" value="C:nucleus"/>
    <property type="evidence" value="ECO:0007669"/>
    <property type="project" value="UniProtKB-SubCell"/>
</dbReference>
<dbReference type="GO" id="GO:0000981">
    <property type="term" value="F:DNA-binding transcription factor activity, RNA polymerase II-specific"/>
    <property type="evidence" value="ECO:0000318"/>
    <property type="project" value="GO_Central"/>
</dbReference>
<dbReference type="GO" id="GO:0000978">
    <property type="term" value="F:RNA polymerase II cis-regulatory region sequence-specific DNA binding"/>
    <property type="evidence" value="ECO:0000318"/>
    <property type="project" value="GO_Central"/>
</dbReference>
<dbReference type="GO" id="GO:0009653">
    <property type="term" value="P:anatomical structure morphogenesis"/>
    <property type="evidence" value="ECO:0000318"/>
    <property type="project" value="GO_Central"/>
</dbReference>
<dbReference type="GO" id="GO:0030154">
    <property type="term" value="P:cell differentiation"/>
    <property type="evidence" value="ECO:0000318"/>
    <property type="project" value="GO_Central"/>
</dbReference>
<dbReference type="GO" id="GO:0006357">
    <property type="term" value="P:regulation of transcription by RNA polymerase II"/>
    <property type="evidence" value="ECO:0000318"/>
    <property type="project" value="GO_Central"/>
</dbReference>
<dbReference type="CDD" id="cd20048">
    <property type="entry name" value="FH_FOXD4-like"/>
    <property type="match status" value="1"/>
</dbReference>
<dbReference type="FunFam" id="1.10.10.10:FF:000016">
    <property type="entry name" value="Forkhead box protein I1"/>
    <property type="match status" value="1"/>
</dbReference>
<dbReference type="Gene3D" id="1.10.10.10">
    <property type="entry name" value="Winged helix-like DNA-binding domain superfamily/Winged helix DNA-binding domain"/>
    <property type="match status" value="1"/>
</dbReference>
<dbReference type="InterPro" id="IPR001766">
    <property type="entry name" value="Fork_head_dom"/>
</dbReference>
<dbReference type="InterPro" id="IPR050211">
    <property type="entry name" value="FOX_domain-containing"/>
</dbReference>
<dbReference type="InterPro" id="IPR018122">
    <property type="entry name" value="TF_fork_head_CS_1"/>
</dbReference>
<dbReference type="InterPro" id="IPR030456">
    <property type="entry name" value="TF_fork_head_CS_2"/>
</dbReference>
<dbReference type="InterPro" id="IPR036388">
    <property type="entry name" value="WH-like_DNA-bd_sf"/>
</dbReference>
<dbReference type="InterPro" id="IPR036390">
    <property type="entry name" value="WH_DNA-bd_sf"/>
</dbReference>
<dbReference type="PANTHER" id="PTHR11829:SF402">
    <property type="entry name" value="FORK HEAD DOMAIN-CONTAINING PROTEIN FD3-RELATED"/>
    <property type="match status" value="1"/>
</dbReference>
<dbReference type="PANTHER" id="PTHR11829">
    <property type="entry name" value="FORKHEAD BOX PROTEIN"/>
    <property type="match status" value="1"/>
</dbReference>
<dbReference type="Pfam" id="PF00250">
    <property type="entry name" value="Forkhead"/>
    <property type="match status" value="1"/>
</dbReference>
<dbReference type="PRINTS" id="PR00053">
    <property type="entry name" value="FORKHEAD"/>
</dbReference>
<dbReference type="SMART" id="SM00339">
    <property type="entry name" value="FH"/>
    <property type="match status" value="1"/>
</dbReference>
<dbReference type="SUPFAM" id="SSF46785">
    <property type="entry name" value="Winged helix' DNA-binding domain"/>
    <property type="match status" value="1"/>
</dbReference>
<dbReference type="PROSITE" id="PS00657">
    <property type="entry name" value="FORK_HEAD_1"/>
    <property type="match status" value="1"/>
</dbReference>
<dbReference type="PROSITE" id="PS00658">
    <property type="entry name" value="FORK_HEAD_2"/>
    <property type="match status" value="1"/>
</dbReference>
<dbReference type="PROSITE" id="PS50039">
    <property type="entry name" value="FORK_HEAD_3"/>
    <property type="match status" value="1"/>
</dbReference>
<protein>
    <recommendedName>
        <fullName>Fork head domain-containing protein FD3</fullName>
    </recommendedName>
</protein>
<evidence type="ECO:0000255" key="1">
    <source>
        <dbReference type="PROSITE-ProRule" id="PRU00089"/>
    </source>
</evidence>
<evidence type="ECO:0000256" key="2">
    <source>
        <dbReference type="SAM" id="MobiDB-lite"/>
    </source>
</evidence>
<evidence type="ECO:0000269" key="3">
    <source>
    </source>
</evidence>
<evidence type="ECO:0000305" key="4"/>
<gene>
    <name type="primary">fd59A</name>
    <name type="synonym">FD3</name>
    <name type="ORF">CG3668</name>
</gene>
<proteinExistence type="evidence at transcript level"/>
<reference key="1">
    <citation type="journal article" date="2000" name="Science">
        <title>The genome sequence of Drosophila melanogaster.</title>
        <authorList>
            <person name="Adams M.D."/>
            <person name="Celniker S.E."/>
            <person name="Holt R.A."/>
            <person name="Evans C.A."/>
            <person name="Gocayne J.D."/>
            <person name="Amanatides P.G."/>
            <person name="Scherer S.E."/>
            <person name="Li P.W."/>
            <person name="Hoskins R.A."/>
            <person name="Galle R.F."/>
            <person name="George R.A."/>
            <person name="Lewis S.E."/>
            <person name="Richards S."/>
            <person name="Ashburner M."/>
            <person name="Henderson S.N."/>
            <person name="Sutton G.G."/>
            <person name="Wortman J.R."/>
            <person name="Yandell M.D."/>
            <person name="Zhang Q."/>
            <person name="Chen L.X."/>
            <person name="Brandon R.C."/>
            <person name="Rogers Y.-H.C."/>
            <person name="Blazej R.G."/>
            <person name="Champe M."/>
            <person name="Pfeiffer B.D."/>
            <person name="Wan K.H."/>
            <person name="Doyle C."/>
            <person name="Baxter E.G."/>
            <person name="Helt G."/>
            <person name="Nelson C.R."/>
            <person name="Miklos G.L.G."/>
            <person name="Abril J.F."/>
            <person name="Agbayani A."/>
            <person name="An H.-J."/>
            <person name="Andrews-Pfannkoch C."/>
            <person name="Baldwin D."/>
            <person name="Ballew R.M."/>
            <person name="Basu A."/>
            <person name="Baxendale J."/>
            <person name="Bayraktaroglu L."/>
            <person name="Beasley E.M."/>
            <person name="Beeson K.Y."/>
            <person name="Benos P.V."/>
            <person name="Berman B.P."/>
            <person name="Bhandari D."/>
            <person name="Bolshakov S."/>
            <person name="Borkova D."/>
            <person name="Botchan M.R."/>
            <person name="Bouck J."/>
            <person name="Brokstein P."/>
            <person name="Brottier P."/>
            <person name="Burtis K.C."/>
            <person name="Busam D.A."/>
            <person name="Butler H."/>
            <person name="Cadieu E."/>
            <person name="Center A."/>
            <person name="Chandra I."/>
            <person name="Cherry J.M."/>
            <person name="Cawley S."/>
            <person name="Dahlke C."/>
            <person name="Davenport L.B."/>
            <person name="Davies P."/>
            <person name="de Pablos B."/>
            <person name="Delcher A."/>
            <person name="Deng Z."/>
            <person name="Mays A.D."/>
            <person name="Dew I."/>
            <person name="Dietz S.M."/>
            <person name="Dodson K."/>
            <person name="Doup L.E."/>
            <person name="Downes M."/>
            <person name="Dugan-Rocha S."/>
            <person name="Dunkov B.C."/>
            <person name="Dunn P."/>
            <person name="Durbin K.J."/>
            <person name="Evangelista C.C."/>
            <person name="Ferraz C."/>
            <person name="Ferriera S."/>
            <person name="Fleischmann W."/>
            <person name="Fosler C."/>
            <person name="Gabrielian A.E."/>
            <person name="Garg N.S."/>
            <person name="Gelbart W.M."/>
            <person name="Glasser K."/>
            <person name="Glodek A."/>
            <person name="Gong F."/>
            <person name="Gorrell J.H."/>
            <person name="Gu Z."/>
            <person name="Guan P."/>
            <person name="Harris M."/>
            <person name="Harris N.L."/>
            <person name="Harvey D.A."/>
            <person name="Heiman T.J."/>
            <person name="Hernandez J.R."/>
            <person name="Houck J."/>
            <person name="Hostin D."/>
            <person name="Houston K.A."/>
            <person name="Howland T.J."/>
            <person name="Wei M.-H."/>
            <person name="Ibegwam C."/>
            <person name="Jalali M."/>
            <person name="Kalush F."/>
            <person name="Karpen G.H."/>
            <person name="Ke Z."/>
            <person name="Kennison J.A."/>
            <person name="Ketchum K.A."/>
            <person name="Kimmel B.E."/>
            <person name="Kodira C.D."/>
            <person name="Kraft C.L."/>
            <person name="Kravitz S."/>
            <person name="Kulp D."/>
            <person name="Lai Z."/>
            <person name="Lasko P."/>
            <person name="Lei Y."/>
            <person name="Levitsky A.A."/>
            <person name="Li J.H."/>
            <person name="Li Z."/>
            <person name="Liang Y."/>
            <person name="Lin X."/>
            <person name="Liu X."/>
            <person name="Mattei B."/>
            <person name="McIntosh T.C."/>
            <person name="McLeod M.P."/>
            <person name="McPherson D."/>
            <person name="Merkulov G."/>
            <person name="Milshina N.V."/>
            <person name="Mobarry C."/>
            <person name="Morris J."/>
            <person name="Moshrefi A."/>
            <person name="Mount S.M."/>
            <person name="Moy M."/>
            <person name="Murphy B."/>
            <person name="Murphy L."/>
            <person name="Muzny D.M."/>
            <person name="Nelson D.L."/>
            <person name="Nelson D.R."/>
            <person name="Nelson K.A."/>
            <person name="Nixon K."/>
            <person name="Nusskern D.R."/>
            <person name="Pacleb J.M."/>
            <person name="Palazzolo M."/>
            <person name="Pittman G.S."/>
            <person name="Pan S."/>
            <person name="Pollard J."/>
            <person name="Puri V."/>
            <person name="Reese M.G."/>
            <person name="Reinert K."/>
            <person name="Remington K."/>
            <person name="Saunders R.D.C."/>
            <person name="Scheeler F."/>
            <person name="Shen H."/>
            <person name="Shue B.C."/>
            <person name="Siden-Kiamos I."/>
            <person name="Simpson M."/>
            <person name="Skupski M.P."/>
            <person name="Smith T.J."/>
            <person name="Spier E."/>
            <person name="Spradling A.C."/>
            <person name="Stapleton M."/>
            <person name="Strong R."/>
            <person name="Sun E."/>
            <person name="Svirskas R."/>
            <person name="Tector C."/>
            <person name="Turner R."/>
            <person name="Venter E."/>
            <person name="Wang A.H."/>
            <person name="Wang X."/>
            <person name="Wang Z.-Y."/>
            <person name="Wassarman D.A."/>
            <person name="Weinstock G.M."/>
            <person name="Weissenbach J."/>
            <person name="Williams S.M."/>
            <person name="Woodage T."/>
            <person name="Worley K.C."/>
            <person name="Wu D."/>
            <person name="Yang S."/>
            <person name="Yao Q.A."/>
            <person name="Ye J."/>
            <person name="Yeh R.-F."/>
            <person name="Zaveri J.S."/>
            <person name="Zhan M."/>
            <person name="Zhang G."/>
            <person name="Zhao Q."/>
            <person name="Zheng L."/>
            <person name="Zheng X.H."/>
            <person name="Zhong F.N."/>
            <person name="Zhong W."/>
            <person name="Zhou X."/>
            <person name="Zhu S.C."/>
            <person name="Zhu X."/>
            <person name="Smith H.O."/>
            <person name="Gibbs R.A."/>
            <person name="Myers E.W."/>
            <person name="Rubin G.M."/>
            <person name="Venter J.C."/>
        </authorList>
    </citation>
    <scope>NUCLEOTIDE SEQUENCE [LARGE SCALE GENOMIC DNA]</scope>
    <source>
        <strain>Berkeley</strain>
    </source>
</reference>
<reference key="2">
    <citation type="journal article" date="2002" name="Genome Biol.">
        <title>Annotation of the Drosophila melanogaster euchromatic genome: a systematic review.</title>
        <authorList>
            <person name="Misra S."/>
            <person name="Crosby M.A."/>
            <person name="Mungall C.J."/>
            <person name="Matthews B.B."/>
            <person name="Campbell K.S."/>
            <person name="Hradecky P."/>
            <person name="Huang Y."/>
            <person name="Kaminker J.S."/>
            <person name="Millburn G.H."/>
            <person name="Prochnik S.E."/>
            <person name="Smith C.D."/>
            <person name="Tupy J.L."/>
            <person name="Whitfield E.J."/>
            <person name="Bayraktaroglu L."/>
            <person name="Berman B.P."/>
            <person name="Bettencourt B.R."/>
            <person name="Celniker S.E."/>
            <person name="de Grey A.D.N.J."/>
            <person name="Drysdale R.A."/>
            <person name="Harris N.L."/>
            <person name="Richter J."/>
            <person name="Russo S."/>
            <person name="Schroeder A.J."/>
            <person name="Shu S.Q."/>
            <person name="Stapleton M."/>
            <person name="Yamada C."/>
            <person name="Ashburner M."/>
            <person name="Gelbart W.M."/>
            <person name="Rubin G.M."/>
            <person name="Lewis S.E."/>
        </authorList>
    </citation>
    <scope>GENOME REANNOTATION</scope>
    <source>
        <strain>Berkeley</strain>
    </source>
</reference>
<reference key="3">
    <citation type="journal article" date="2002" name="Genome Biol.">
        <title>A Drosophila full-length cDNA resource.</title>
        <authorList>
            <person name="Stapleton M."/>
            <person name="Carlson J.W."/>
            <person name="Brokstein P."/>
            <person name="Yu C."/>
            <person name="Champe M."/>
            <person name="George R.A."/>
            <person name="Guarin H."/>
            <person name="Kronmiller B."/>
            <person name="Pacleb J.M."/>
            <person name="Park S."/>
            <person name="Wan K.H."/>
            <person name="Rubin G.M."/>
            <person name="Celniker S.E."/>
        </authorList>
    </citation>
    <scope>NUCLEOTIDE SEQUENCE [LARGE SCALE MRNA]</scope>
    <source>
        <strain>Berkeley</strain>
        <tissue>Embryo</tissue>
    </source>
</reference>
<reference key="4">
    <citation type="submission" date="2006-10" db="EMBL/GenBank/DDBJ databases">
        <authorList>
            <person name="Stapleton M."/>
            <person name="Carlson J.W."/>
            <person name="Frise E."/>
            <person name="Kapadia B."/>
            <person name="Park S."/>
            <person name="Wan K.H."/>
            <person name="Yu C."/>
            <person name="Celniker S.E."/>
        </authorList>
    </citation>
    <scope>NUCLEOTIDE SEQUENCE [LARGE SCALE MRNA]</scope>
    <source>
        <strain>Berkeley</strain>
    </source>
</reference>
<reference key="5">
    <citation type="journal article" date="1992" name="Proc. Natl. Acad. Sci. U.S.A.">
        <title>Developmentally regulated Drosophila gene family encoding the fork head domain.</title>
        <authorList>
            <person name="Haecker U."/>
            <person name="Grossniklaus U."/>
            <person name="Gehring W.J."/>
            <person name="Jaeckle H."/>
        </authorList>
    </citation>
    <scope>NUCLEOTIDE SEQUENCE [GENOMIC DNA] OF 70-197</scope>
    <scope>FUNCTION</scope>
    <scope>TISSUE SPECIFICITY</scope>
    <scope>DEVELOPMENTAL STAGE</scope>
</reference>
<feature type="chain" id="PRO_0000091911" description="Fork head domain-containing protein FD3">
    <location>
        <begin position="1"/>
        <end position="456"/>
    </location>
</feature>
<feature type="DNA-binding region" description="Fork-head" evidence="1">
    <location>
        <begin position="84"/>
        <end position="175"/>
    </location>
</feature>
<feature type="region of interest" description="Disordered" evidence="2">
    <location>
        <begin position="1"/>
        <end position="29"/>
    </location>
</feature>
<feature type="region of interest" description="Disordered" evidence="2">
    <location>
        <begin position="55"/>
        <end position="80"/>
    </location>
</feature>
<feature type="region of interest" description="Disordered" evidence="2">
    <location>
        <begin position="280"/>
        <end position="305"/>
    </location>
</feature>
<feature type="region of interest" description="Disordered" evidence="2">
    <location>
        <begin position="351"/>
        <end position="392"/>
    </location>
</feature>
<feature type="region of interest" description="Disordered" evidence="2">
    <location>
        <begin position="404"/>
        <end position="429"/>
    </location>
</feature>
<feature type="compositionally biased region" description="Polar residues" evidence="2">
    <location>
        <begin position="1"/>
        <end position="17"/>
    </location>
</feature>
<feature type="compositionally biased region" description="Gly residues" evidence="2">
    <location>
        <begin position="64"/>
        <end position="80"/>
    </location>
</feature>
<feature type="compositionally biased region" description="Gly residues" evidence="2">
    <location>
        <begin position="289"/>
        <end position="298"/>
    </location>
</feature>
<feature type="compositionally biased region" description="Acidic residues" evidence="2">
    <location>
        <begin position="351"/>
        <end position="364"/>
    </location>
</feature>
<feature type="sequence conflict" description="In Ref. 3; AAL89942." evidence="4" ref="3">
    <original>E</original>
    <variation>D</variation>
    <location>
        <position position="225"/>
    </location>
</feature>
<name>FD3_DROME</name>
<keyword id="KW-0217">Developmental protein</keyword>
<keyword id="KW-0238">DNA-binding</keyword>
<keyword id="KW-0539">Nucleus</keyword>
<keyword id="KW-1185">Reference proteome</keyword>
<keyword id="KW-0804">Transcription</keyword>
<keyword id="KW-0805">Transcription regulation</keyword>
<organism>
    <name type="scientific">Drosophila melanogaster</name>
    <name type="common">Fruit fly</name>
    <dbReference type="NCBI Taxonomy" id="7227"/>
    <lineage>
        <taxon>Eukaryota</taxon>
        <taxon>Metazoa</taxon>
        <taxon>Ecdysozoa</taxon>
        <taxon>Arthropoda</taxon>
        <taxon>Hexapoda</taxon>
        <taxon>Insecta</taxon>
        <taxon>Pterygota</taxon>
        <taxon>Neoptera</taxon>
        <taxon>Endopterygota</taxon>
        <taxon>Diptera</taxon>
        <taxon>Brachycera</taxon>
        <taxon>Muscomorpha</taxon>
        <taxon>Ephydroidea</taxon>
        <taxon>Drosophilidae</taxon>
        <taxon>Drosophila</taxon>
        <taxon>Sophophora</taxon>
    </lineage>
</organism>
<accession>Q02361</accession>
<accession>Q1LZ28</accession>
<accession>Q8T4G1</accession>
<accession>Q9W1Y5</accession>